<keyword id="KW-0238">DNA-binding</keyword>
<keyword id="KW-0804">Transcription</keyword>
<keyword id="KW-0805">Transcription regulation</keyword>
<organism>
    <name type="scientific">Psychrobacter sp. (strain PRwf-1)</name>
    <dbReference type="NCBI Taxonomy" id="349106"/>
    <lineage>
        <taxon>Bacteria</taxon>
        <taxon>Pseudomonadati</taxon>
        <taxon>Pseudomonadota</taxon>
        <taxon>Gammaproteobacteria</taxon>
        <taxon>Moraxellales</taxon>
        <taxon>Moraxellaceae</taxon>
        <taxon>Psychrobacter</taxon>
    </lineage>
</organism>
<comment type="function">
    <text evidence="1">Necessary for efficient RNA polymerase transcription elongation past template-encoded arresting sites. The arresting sites in DNA have the property of trapping a certain fraction of elongating RNA polymerases that pass through, resulting in locked ternary complexes. Cleavage of the nascent transcript by cleavage factors such as GreA or GreB allows the resumption of elongation from the new 3'terminus. GreA releases sequences of 2 to 3 nucleotides.</text>
</comment>
<comment type="similarity">
    <text evidence="1">Belongs to the GreA/GreB family.</text>
</comment>
<name>GREA_PSYWF</name>
<proteinExistence type="inferred from homology"/>
<reference key="1">
    <citation type="submission" date="2007-05" db="EMBL/GenBank/DDBJ databases">
        <title>Complete sequence of chromosome of Psychrobacter sp. PRwf-1.</title>
        <authorList>
            <consortium name="US DOE Joint Genome Institute"/>
            <person name="Copeland A."/>
            <person name="Lucas S."/>
            <person name="Lapidus A."/>
            <person name="Barry K."/>
            <person name="Detter J.C."/>
            <person name="Glavina del Rio T."/>
            <person name="Hammon N."/>
            <person name="Israni S."/>
            <person name="Dalin E."/>
            <person name="Tice H."/>
            <person name="Pitluck S."/>
            <person name="Chain P."/>
            <person name="Malfatti S."/>
            <person name="Shin M."/>
            <person name="Vergez L."/>
            <person name="Schmutz J."/>
            <person name="Larimer F."/>
            <person name="Land M."/>
            <person name="Hauser L."/>
            <person name="Kyrpides N."/>
            <person name="Kim E."/>
            <person name="Tiedje J."/>
            <person name="Richardson P."/>
        </authorList>
    </citation>
    <scope>NUCLEOTIDE SEQUENCE [LARGE SCALE GENOMIC DNA]</scope>
    <source>
        <strain>PRwf-1</strain>
    </source>
</reference>
<sequence length="158" mass="17616">MQRYPMTPQGHAALEAELKQLKSVDRPRITAAIAEAREHGDLKENAEYHAAREQQGFCEARIRDIEAKLSGAQVIDPATLPREGRVVFGVTVVIENLDTEEQKRYQIVGDDEADFKNNKISVNSPIARGLIGKSEGDEARIETPSGLVEFEIIEVIYQ</sequence>
<evidence type="ECO:0000255" key="1">
    <source>
        <dbReference type="HAMAP-Rule" id="MF_00105"/>
    </source>
</evidence>
<gene>
    <name evidence="1" type="primary">greA</name>
    <name type="ordered locus">PsycPRwf_0832</name>
</gene>
<protein>
    <recommendedName>
        <fullName evidence="1">Transcription elongation factor GreA</fullName>
    </recommendedName>
    <alternativeName>
        <fullName evidence="1">Transcript cleavage factor GreA</fullName>
    </alternativeName>
</protein>
<accession>A5WDP3</accession>
<feature type="chain" id="PRO_1000075885" description="Transcription elongation factor GreA">
    <location>
        <begin position="1"/>
        <end position="158"/>
    </location>
</feature>
<dbReference type="EMBL" id="CP000713">
    <property type="protein sequence ID" value="ABQ93784.1"/>
    <property type="molecule type" value="Genomic_DNA"/>
</dbReference>
<dbReference type="SMR" id="A5WDP3"/>
<dbReference type="STRING" id="349106.PsycPRwf_0832"/>
<dbReference type="KEGG" id="prw:PsycPRwf_0832"/>
<dbReference type="eggNOG" id="COG0782">
    <property type="taxonomic scope" value="Bacteria"/>
</dbReference>
<dbReference type="HOGENOM" id="CLU_101379_2_0_6"/>
<dbReference type="GO" id="GO:0003677">
    <property type="term" value="F:DNA binding"/>
    <property type="evidence" value="ECO:0007669"/>
    <property type="project" value="UniProtKB-UniRule"/>
</dbReference>
<dbReference type="GO" id="GO:0070063">
    <property type="term" value="F:RNA polymerase binding"/>
    <property type="evidence" value="ECO:0007669"/>
    <property type="project" value="InterPro"/>
</dbReference>
<dbReference type="GO" id="GO:0006354">
    <property type="term" value="P:DNA-templated transcription elongation"/>
    <property type="evidence" value="ECO:0007669"/>
    <property type="project" value="TreeGrafter"/>
</dbReference>
<dbReference type="GO" id="GO:0032784">
    <property type="term" value="P:regulation of DNA-templated transcription elongation"/>
    <property type="evidence" value="ECO:0007669"/>
    <property type="project" value="UniProtKB-UniRule"/>
</dbReference>
<dbReference type="FunFam" id="1.10.287.180:FF:000001">
    <property type="entry name" value="Transcription elongation factor GreA"/>
    <property type="match status" value="1"/>
</dbReference>
<dbReference type="FunFam" id="3.10.50.30:FF:000001">
    <property type="entry name" value="Transcription elongation factor GreA"/>
    <property type="match status" value="1"/>
</dbReference>
<dbReference type="Gene3D" id="3.10.50.30">
    <property type="entry name" value="Transcription elongation factor, GreA/GreB, C-terminal domain"/>
    <property type="match status" value="1"/>
</dbReference>
<dbReference type="Gene3D" id="1.10.287.180">
    <property type="entry name" value="Transcription elongation factor, GreA/GreB, N-terminal domain"/>
    <property type="match status" value="1"/>
</dbReference>
<dbReference type="HAMAP" id="MF_00105">
    <property type="entry name" value="GreA_GreB"/>
    <property type="match status" value="1"/>
</dbReference>
<dbReference type="InterPro" id="IPR036953">
    <property type="entry name" value="GreA/GreB_C_sf"/>
</dbReference>
<dbReference type="InterPro" id="IPR018151">
    <property type="entry name" value="TF_GreA/GreB_CS"/>
</dbReference>
<dbReference type="InterPro" id="IPR006359">
    <property type="entry name" value="Tscrpt_elong_fac_GreA"/>
</dbReference>
<dbReference type="InterPro" id="IPR028624">
    <property type="entry name" value="Tscrpt_elong_fac_GreA/B"/>
</dbReference>
<dbReference type="InterPro" id="IPR001437">
    <property type="entry name" value="Tscrpt_elong_fac_GreA/B_C"/>
</dbReference>
<dbReference type="InterPro" id="IPR023459">
    <property type="entry name" value="Tscrpt_elong_fac_GreA/B_fam"/>
</dbReference>
<dbReference type="InterPro" id="IPR022691">
    <property type="entry name" value="Tscrpt_elong_fac_GreA/B_N"/>
</dbReference>
<dbReference type="InterPro" id="IPR036805">
    <property type="entry name" value="Tscrpt_elong_fac_GreA/B_N_sf"/>
</dbReference>
<dbReference type="NCBIfam" id="TIGR01462">
    <property type="entry name" value="greA"/>
    <property type="match status" value="1"/>
</dbReference>
<dbReference type="NCBIfam" id="NF001261">
    <property type="entry name" value="PRK00226.1-2"/>
    <property type="match status" value="1"/>
</dbReference>
<dbReference type="NCBIfam" id="NF001263">
    <property type="entry name" value="PRK00226.1-4"/>
    <property type="match status" value="1"/>
</dbReference>
<dbReference type="NCBIfam" id="NF001264">
    <property type="entry name" value="PRK00226.1-5"/>
    <property type="match status" value="1"/>
</dbReference>
<dbReference type="PANTHER" id="PTHR30437">
    <property type="entry name" value="TRANSCRIPTION ELONGATION FACTOR GREA"/>
    <property type="match status" value="1"/>
</dbReference>
<dbReference type="PANTHER" id="PTHR30437:SF4">
    <property type="entry name" value="TRANSCRIPTION ELONGATION FACTOR GREA"/>
    <property type="match status" value="1"/>
</dbReference>
<dbReference type="Pfam" id="PF01272">
    <property type="entry name" value="GreA_GreB"/>
    <property type="match status" value="1"/>
</dbReference>
<dbReference type="Pfam" id="PF03449">
    <property type="entry name" value="GreA_GreB_N"/>
    <property type="match status" value="1"/>
</dbReference>
<dbReference type="PIRSF" id="PIRSF006092">
    <property type="entry name" value="GreA_GreB"/>
    <property type="match status" value="1"/>
</dbReference>
<dbReference type="SUPFAM" id="SSF54534">
    <property type="entry name" value="FKBP-like"/>
    <property type="match status" value="1"/>
</dbReference>
<dbReference type="SUPFAM" id="SSF46557">
    <property type="entry name" value="GreA transcript cleavage protein, N-terminal domain"/>
    <property type="match status" value="1"/>
</dbReference>
<dbReference type="PROSITE" id="PS00829">
    <property type="entry name" value="GREAB_1"/>
    <property type="match status" value="1"/>
</dbReference>
<dbReference type="PROSITE" id="PS00830">
    <property type="entry name" value="GREAB_2"/>
    <property type="match status" value="1"/>
</dbReference>